<protein>
    <recommendedName>
        <fullName evidence="33">Jasmonoyl--L-amino acid synthetase JAR1</fullName>
        <ecNumber evidence="21">6.3.2.52</ecNumber>
    </recommendedName>
    <alternativeName>
        <fullName evidence="33">Jasmonate-amino acid synthetase JAR1</fullName>
    </alternativeName>
    <alternativeName>
        <fullName evidence="33">Jasmonic acid-amido synthetase JAR1</fullName>
    </alternativeName>
    <alternativeName>
        <fullName evidence="30">Protein FAR-RED INSENSITIVE 219</fullName>
    </alternativeName>
    <alternativeName>
        <fullName evidence="31">Protein JASMONATE RESISTANT 1</fullName>
    </alternativeName>
</protein>
<evidence type="ECO:0000255" key="1"/>
<evidence type="ECO:0000269" key="2">
    <source>
    </source>
</evidence>
<evidence type="ECO:0000269" key="3">
    <source>
    </source>
</evidence>
<evidence type="ECO:0000269" key="4">
    <source>
    </source>
</evidence>
<evidence type="ECO:0000269" key="5">
    <source>
    </source>
</evidence>
<evidence type="ECO:0000269" key="6">
    <source>
    </source>
</evidence>
<evidence type="ECO:0000269" key="7">
    <source>
    </source>
</evidence>
<evidence type="ECO:0000269" key="8">
    <source>
    </source>
</evidence>
<evidence type="ECO:0000269" key="9">
    <source>
    </source>
</evidence>
<evidence type="ECO:0000269" key="10">
    <source>
    </source>
</evidence>
<evidence type="ECO:0000269" key="11">
    <source>
    </source>
</evidence>
<evidence type="ECO:0000269" key="12">
    <source>
    </source>
</evidence>
<evidence type="ECO:0000269" key="13">
    <source>
    </source>
</evidence>
<evidence type="ECO:0000269" key="14">
    <source>
    </source>
</evidence>
<evidence type="ECO:0000269" key="15">
    <source>
    </source>
</evidence>
<evidence type="ECO:0000269" key="16">
    <source>
    </source>
</evidence>
<evidence type="ECO:0000269" key="17">
    <source>
    </source>
</evidence>
<evidence type="ECO:0000269" key="18">
    <source>
    </source>
</evidence>
<evidence type="ECO:0000269" key="19">
    <source>
    </source>
</evidence>
<evidence type="ECO:0000269" key="20">
    <source>
    </source>
</evidence>
<evidence type="ECO:0000269" key="21">
    <source>
    </source>
</evidence>
<evidence type="ECO:0000269" key="22">
    <source>
    </source>
</evidence>
<evidence type="ECO:0000269" key="23">
    <source>
    </source>
</evidence>
<evidence type="ECO:0000269" key="24">
    <source>
    </source>
</evidence>
<evidence type="ECO:0000269" key="25">
    <source>
    </source>
</evidence>
<evidence type="ECO:0000269" key="26">
    <source>
    </source>
</evidence>
<evidence type="ECO:0000269" key="27">
    <source>
    </source>
</evidence>
<evidence type="ECO:0000269" key="28">
    <source>
    </source>
</evidence>
<evidence type="ECO:0000269" key="29">
    <source>
    </source>
</evidence>
<evidence type="ECO:0000303" key="30">
    <source>
    </source>
</evidence>
<evidence type="ECO:0000303" key="31">
    <source>
    </source>
</evidence>
<evidence type="ECO:0000303" key="32">
    <source>
    </source>
</evidence>
<evidence type="ECO:0000305" key="33"/>
<evidence type="ECO:0007744" key="34">
    <source>
        <dbReference type="PDB" id="4EPL"/>
    </source>
</evidence>
<evidence type="ECO:0007744" key="35">
    <source>
        <dbReference type="PDB" id="5ECH"/>
    </source>
</evidence>
<evidence type="ECO:0007744" key="36">
    <source>
        <dbReference type="PDB" id="5ECI"/>
    </source>
</evidence>
<evidence type="ECO:0007744" key="37">
    <source>
        <dbReference type="PDB" id="5ECK"/>
    </source>
</evidence>
<evidence type="ECO:0007744" key="38">
    <source>
        <dbReference type="PDB" id="5ECL"/>
    </source>
</evidence>
<evidence type="ECO:0007744" key="39">
    <source>
        <dbReference type="PDB" id="5ECM"/>
    </source>
</evidence>
<evidence type="ECO:0007744" key="40">
    <source>
        <dbReference type="PDB" id="5ECN"/>
    </source>
</evidence>
<evidence type="ECO:0007744" key="41">
    <source>
        <dbReference type="PDB" id="5ECO"/>
    </source>
</evidence>
<evidence type="ECO:0007744" key="42">
    <source>
        <dbReference type="PDB" id="5ECP"/>
    </source>
</evidence>
<evidence type="ECO:0007744" key="43">
    <source>
        <dbReference type="PDB" id="5ECQ"/>
    </source>
</evidence>
<evidence type="ECO:0007744" key="44">
    <source>
        <dbReference type="PDB" id="5ECR"/>
    </source>
</evidence>
<evidence type="ECO:0007744" key="45">
    <source>
        <dbReference type="PDB" id="5GZZ"/>
    </source>
</evidence>
<evidence type="ECO:0007829" key="46">
    <source>
        <dbReference type="PDB" id="4EPL"/>
    </source>
</evidence>
<evidence type="ECO:0007829" key="47">
    <source>
        <dbReference type="PDB" id="5ECH"/>
    </source>
</evidence>
<evidence type="ECO:0007829" key="48">
    <source>
        <dbReference type="PDB" id="5ECI"/>
    </source>
</evidence>
<evidence type="ECO:0007829" key="49">
    <source>
        <dbReference type="PDB" id="5ECK"/>
    </source>
</evidence>
<evidence type="ECO:0007829" key="50">
    <source>
        <dbReference type="PDB" id="5ECL"/>
    </source>
</evidence>
<evidence type="ECO:0007829" key="51">
    <source>
        <dbReference type="PDB" id="5ECM"/>
    </source>
</evidence>
<evidence type="ECO:0007829" key="52">
    <source>
        <dbReference type="PDB" id="5ECR"/>
    </source>
</evidence>
<feature type="chain" id="PRO_0000403931" description="Jasmonoyl--L-amino acid synthetase JAR1">
    <location>
        <begin position="1"/>
        <end position="575"/>
    </location>
</feature>
<feature type="coiled-coil region" evidence="1">
    <location>
        <begin position="10"/>
        <end position="30"/>
    </location>
</feature>
<feature type="binding site" evidence="27 35 36 37 40 42 43">
    <location>
        <position position="98"/>
    </location>
    <ligand>
        <name>ATP</name>
        <dbReference type="ChEBI" id="CHEBI:30616"/>
    </ligand>
</feature>
<feature type="binding site" evidence="26 34">
    <location>
        <position position="101"/>
    </location>
    <ligand>
        <name>jasmonate</name>
        <dbReference type="ChEBI" id="CHEBI:58431"/>
    </ligand>
</feature>
<feature type="binding site" evidence="27 35 36 37 40 42 43">
    <location>
        <position position="118"/>
    </location>
    <ligand>
        <name>ATP</name>
        <dbReference type="ChEBI" id="CHEBI:30616"/>
    </ligand>
</feature>
<feature type="binding site" evidence="27 35 36 37 40 42 43">
    <location>
        <position position="121"/>
    </location>
    <ligand>
        <name>ATP</name>
        <dbReference type="ChEBI" id="CHEBI:30616"/>
    </ligand>
</feature>
<feature type="binding site" evidence="27 35 36 37 40 42 43">
    <location>
        <position position="163"/>
    </location>
    <ligand>
        <name>ATP</name>
        <dbReference type="ChEBI" id="CHEBI:30616"/>
    </ligand>
</feature>
<feature type="binding site" evidence="27 37 38 39 40 41 42">
    <location>
        <begin position="166"/>
        <end position="170"/>
    </location>
    <ligand>
        <name>an L-alpha-amino acid</name>
        <dbReference type="ChEBI" id="CHEBI:59869"/>
    </ligand>
</feature>
<feature type="binding site" evidence="27 35 36 37 40 42 43">
    <location>
        <position position="168"/>
    </location>
    <ligand>
        <name>ATP</name>
        <dbReference type="ChEBI" id="CHEBI:30616"/>
    </ligand>
</feature>
<feature type="binding site" evidence="26 27 34 35 36 37 38 39 40 41 42 43 44 45">
    <location>
        <begin position="328"/>
        <end position="331"/>
    </location>
    <ligand>
        <name>jasmonate</name>
        <dbReference type="ChEBI" id="CHEBI:58431"/>
    </ligand>
</feature>
<feature type="binding site" evidence="27 35 36 37 40 42 43">
    <location>
        <begin position="331"/>
        <end position="336"/>
    </location>
    <ligand>
        <name>ATP</name>
        <dbReference type="ChEBI" id="CHEBI:30616"/>
    </ligand>
</feature>
<feature type="binding site" evidence="27 38 39 40 42 43 44">
    <location>
        <begin position="530"/>
        <end position="534"/>
    </location>
    <ligand>
        <name>an L-alpha-amino acid</name>
        <dbReference type="ChEBI" id="CHEBI:59869"/>
    </ligand>
</feature>
<feature type="binding site" evidence="27 35 36 37 40 42 43">
    <location>
        <position position="557"/>
    </location>
    <ligand>
        <name>ATP</name>
        <dbReference type="ChEBI" id="CHEBI:30616"/>
    </ligand>
</feature>
<feature type="splice variant" id="VSP_040468" description="In isoform 3." evidence="33">
    <location>
        <begin position="1"/>
        <end position="79"/>
    </location>
</feature>
<feature type="splice variant" id="VSP_040469" description="In isoform 2." evidence="32">
    <location>
        <begin position="13"/>
        <end position="67"/>
    </location>
</feature>
<feature type="mutagenesis site" description="In jar1-1; insensitivity to jasmonate, Strongly reduced adenylation activity." evidence="8 27">
    <original>S</original>
    <variation>F</variation>
    <location>
        <position position="101"/>
    </location>
</feature>
<feature type="mutagenesis site" description="In jar1-5; insensitivity to jasmonate." evidence="8">
    <original>G</original>
    <variation>R</variation>
    <location>
        <position position="303"/>
    </location>
</feature>
<feature type="mutagenesis site" description="In jar1-3; insensitivity to jasmonate." evidence="8">
    <original>E</original>
    <variation>K</variation>
    <location>
        <position position="334"/>
    </location>
</feature>
<feature type="sequence conflict" description="In Ref. 4; AAK92798." evidence="33" ref="4">
    <original>Y</original>
    <variation>N</variation>
    <location>
        <position position="475"/>
    </location>
</feature>
<feature type="sequence conflict" description="In Ref. 7; BAD95281." evidence="33" ref="7">
    <original>T</original>
    <variation>A</variation>
    <location>
        <position position="514"/>
    </location>
</feature>
<feature type="helix" evidence="49">
    <location>
        <begin position="10"/>
        <end position="22"/>
    </location>
</feature>
<feature type="helix" evidence="49">
    <location>
        <begin position="24"/>
        <end position="38"/>
    </location>
</feature>
<feature type="turn" evidence="49">
    <location>
        <begin position="39"/>
        <end position="41"/>
    </location>
</feature>
<feature type="helix" evidence="49">
    <location>
        <begin position="43"/>
        <end position="46"/>
    </location>
</feature>
<feature type="turn" evidence="49">
    <location>
        <begin position="47"/>
        <end position="49"/>
    </location>
</feature>
<feature type="strand" evidence="49">
    <location>
        <begin position="54"/>
        <end position="56"/>
    </location>
</feature>
<feature type="helix" evidence="49">
    <location>
        <begin position="57"/>
        <end position="64"/>
    </location>
</feature>
<feature type="helix" evidence="49">
    <location>
        <begin position="70"/>
        <end position="81"/>
    </location>
</feature>
<feature type="strand" evidence="47">
    <location>
        <begin position="82"/>
        <end position="84"/>
    </location>
</feature>
<feature type="strand" evidence="51">
    <location>
        <begin position="89"/>
        <end position="92"/>
    </location>
</feature>
<feature type="strand" evidence="49">
    <location>
        <begin position="95"/>
        <end position="97"/>
    </location>
</feature>
<feature type="strand" evidence="49">
    <location>
        <begin position="104"/>
        <end position="107"/>
    </location>
</feature>
<feature type="strand" evidence="51">
    <location>
        <begin position="111"/>
        <end position="113"/>
    </location>
</feature>
<feature type="helix" evidence="49">
    <location>
        <begin position="116"/>
        <end position="135"/>
    </location>
</feature>
<feature type="strand" evidence="49">
    <location>
        <begin position="143"/>
        <end position="146"/>
    </location>
</feature>
<feature type="strand" evidence="50">
    <location>
        <begin position="159"/>
        <end position="161"/>
    </location>
</feature>
<feature type="helix" evidence="49">
    <location>
        <begin position="165"/>
        <end position="170"/>
    </location>
</feature>
<feature type="helix" evidence="49">
    <location>
        <begin position="175"/>
        <end position="179"/>
    </location>
</feature>
<feature type="turn" evidence="49">
    <location>
        <begin position="180"/>
        <end position="182"/>
    </location>
</feature>
<feature type="strand" evidence="49">
    <location>
        <begin position="186"/>
        <end position="188"/>
    </location>
</feature>
<feature type="helix" evidence="49">
    <location>
        <begin position="190"/>
        <end position="193"/>
    </location>
</feature>
<feature type="helix" evidence="49">
    <location>
        <begin position="198"/>
        <end position="209"/>
    </location>
</feature>
<feature type="turn" evidence="49">
    <location>
        <begin position="210"/>
        <end position="215"/>
    </location>
</feature>
<feature type="strand" evidence="49">
    <location>
        <begin position="216"/>
        <end position="223"/>
    </location>
</feature>
<feature type="helix" evidence="49">
    <location>
        <begin position="224"/>
        <end position="246"/>
    </location>
</feature>
<feature type="helix" evidence="49">
    <location>
        <begin position="257"/>
        <end position="264"/>
    </location>
</feature>
<feature type="helix" evidence="49">
    <location>
        <begin position="272"/>
        <end position="281"/>
    </location>
</feature>
<feature type="strand" evidence="52">
    <location>
        <begin position="283"/>
        <end position="285"/>
    </location>
</feature>
<feature type="turn" evidence="49">
    <location>
        <begin position="286"/>
        <end position="289"/>
    </location>
</feature>
<feature type="helix" evidence="49">
    <location>
        <begin position="290"/>
        <end position="294"/>
    </location>
</feature>
<feature type="strand" evidence="49">
    <location>
        <begin position="300"/>
        <end position="304"/>
    </location>
</feature>
<feature type="helix" evidence="49">
    <location>
        <begin position="307"/>
        <end position="312"/>
    </location>
</feature>
<feature type="helix" evidence="49">
    <location>
        <begin position="313"/>
        <end position="320"/>
    </location>
</feature>
<feature type="strand" evidence="49">
    <location>
        <begin position="325"/>
        <end position="327"/>
    </location>
</feature>
<feature type="strand" evidence="49">
    <location>
        <begin position="330"/>
        <end position="332"/>
    </location>
</feature>
<feature type="strand" evidence="49">
    <location>
        <begin position="335"/>
        <end position="339"/>
    </location>
</feature>
<feature type="turn" evidence="48">
    <location>
        <begin position="347"/>
        <end position="349"/>
    </location>
</feature>
<feature type="strand" evidence="49">
    <location>
        <begin position="352"/>
        <end position="354"/>
    </location>
</feature>
<feature type="helix" evidence="49">
    <location>
        <begin position="356"/>
        <end position="358"/>
    </location>
</feature>
<feature type="strand" evidence="49">
    <location>
        <begin position="362"/>
        <end position="365"/>
    </location>
</feature>
<feature type="strand" evidence="49">
    <location>
        <begin position="369"/>
        <end position="371"/>
    </location>
</feature>
<feature type="strand" evidence="51">
    <location>
        <begin position="379"/>
        <end position="382"/>
    </location>
</feature>
<feature type="strand" evidence="49">
    <location>
        <begin position="387"/>
        <end position="392"/>
    </location>
</feature>
<feature type="strand" evidence="48">
    <location>
        <begin position="394"/>
        <end position="397"/>
    </location>
</feature>
<feature type="strand" evidence="49">
    <location>
        <begin position="399"/>
        <end position="413"/>
    </location>
</feature>
<feature type="strand" evidence="49">
    <location>
        <begin position="416"/>
        <end position="421"/>
    </location>
</feature>
<feature type="strand" evidence="46">
    <location>
        <begin position="431"/>
        <end position="433"/>
    </location>
</feature>
<feature type="helix" evidence="49">
    <location>
        <begin position="438"/>
        <end position="453"/>
    </location>
</feature>
<feature type="turn" evidence="49">
    <location>
        <begin position="454"/>
        <end position="456"/>
    </location>
</feature>
<feature type="strand" evidence="49">
    <location>
        <begin position="459"/>
        <end position="467"/>
    </location>
</feature>
<feature type="strand" evidence="49">
    <location>
        <begin position="469"/>
        <end position="472"/>
    </location>
</feature>
<feature type="strand" evidence="49">
    <location>
        <begin position="474"/>
        <end position="482"/>
    </location>
</feature>
<feature type="helix" evidence="49">
    <location>
        <begin position="487"/>
        <end position="498"/>
    </location>
</feature>
<feature type="helix" evidence="49">
    <location>
        <begin position="504"/>
        <end position="512"/>
    </location>
</feature>
<feature type="strand" evidence="49">
    <location>
        <begin position="514"/>
        <end position="522"/>
    </location>
</feature>
<feature type="helix" evidence="49">
    <location>
        <begin position="527"/>
        <end position="536"/>
    </location>
</feature>
<feature type="strand" evidence="49">
    <location>
        <begin position="538"/>
        <end position="540"/>
    </location>
</feature>
<feature type="strand" evidence="49">
    <location>
        <begin position="549"/>
        <end position="551"/>
    </location>
</feature>
<feature type="helix" evidence="49">
    <location>
        <begin position="557"/>
        <end position="563"/>
    </location>
</feature>
<feature type="strand" evidence="49">
    <location>
        <begin position="567"/>
        <end position="571"/>
    </location>
</feature>
<proteinExistence type="evidence at protein level"/>
<sequence>MLEKVETFDMNRVIDEFDEMTRNAHQVQKQTLKEILLKNQSAIYLQNCGLNGNATDPEEAFKSMVPLVTDVELEPYIKRMVDGDTSPILTGHPVPAISLSSGTSQGRPKFIPFTDELMENTLQLFRTAFAFRNRDFPIDDNGKALQFIFSSKQYISTGGVPVGTATTNVYRNPNFKAGMKSITSPSCSPDEVIFSPDVHQALYCHLLSGILFRDQVQYVFAVFAHGLVHAFRTFEQVWEEIVTDIKDGVLSNRITVPSVRTAMSKLLTPNPELAETIRTKCMSLSNWYGLIPALFPNAKYVYGIMTGSMEPYVPKLRHYAGDLPLVSHDYGSSEGWIAANVTPRLSPEEATFAVIPNLGYFEFLPVSETGEGEEKPVGLTQVKIGEEYEVVITNYAGLYRYRLGDVVKVIGFYNNTPQLKFICRRNLILSINIDKNTERDLQLSVESAAKRLSEEKIEVIDFSSYIDVSTDPGHYAIFWEISGETNEDVLQDCCNCLDRAFIDAGYVSSRKCKTIGALELRVVAKGTFRKIQEHFLGLGSSAGQFKMPRCVKPSNAKVLQILCENVVSSYFSTAF</sequence>
<gene>
    <name evidence="31" type="primary">JAR1</name>
    <name evidence="30" type="synonym">FIN219</name>
    <name type="ordered locus">At2g46370</name>
    <name type="ORF">F11C10.6</name>
</gene>
<comment type="function">
    <text evidence="2 3 4 5 6 7 8 9 10 11 12 13 14 15 16 17 18 19 20 21 22 23 24 25 27 28 29">Catalyzes the synthesis of jasmonates-amino acid conjugates by adenylation; can use Ile and, in vitro at least, Val, Leu and Phe as conjugating amino acids on jasmonic acid (JA) and 9,10-dihydro-JA substrates, and to a lower extent, on 3-oxo-2-(2Z-pentenyl)-cyclopentane-1-butyric acid (OPC-4) and 12-hydroxy-JA (12-OH-JA). Can synthesize adenosine 5-tetraphosphate in vitro. Required for the JA-mediated signaling pathway that regulates many developmental and defense mechanisms, including growth root inhibition, vegetative storage proteins (VSPs) accumulation, induced systemic resistance (ISR), response to wounding and herbivores, tolerance to ozone O(3) (probably having a role in lesion containment). Plays an important role in the accumulation of JA-Ile in response to wounding, both locally and systemically; promotes JA responding genes especially in distal part of wounded plants, via the JA-Ile-stimulated degradation of JAZ repressor proteins by the SCF(COI)E3 ubiquitin-protein ligase pathway. Involved in the apoptosis-like programmed cell death (PCD) induced by fungal toxin fumonisin B1-mediated (FB1). Required for volatile compounds (C6-aldehydes and allo-ocimene)-mediated defense activation. Involved in the non-pathogenic rhizobacterium-mediated ISR (defense priming) by P.fluorescens (strains CHAOr and WCS417r) and P.putida LSW17S against infection leaf pathogens such as P.syringae pv. tomato and H.parasitica. Required for the JA-dependent resistance to fungi such as P.irregulare, U.vignae and U.appendiculatus. Necessary to induce systemic resistance against R.solanaceraum and P.syringae pv. tomato with P.oligandrum (a non-pathogenic biocontrol agent) cell wall protein fraction (CWP). Mediates PGIP2 accumulation in response to B.cinerea infection and thus contributes to resistance against this pathogen. Modulates the UV-B alteration of leaves attractiveness to diamondback moths P.xylostella leading to insect oviposition. Involved in the regulation of far-red light influence on development, being an actor of the interplay between light and JA signaling (PubMed:28223489). Seems necessary for the salicylic acid (SA)-mediated, NPR1-independent resistance pathway. May contribute to the chitin-elicited pathway. Contributes to the sensitivity toward F.graminearum.</text>
</comment>
<comment type="catalytic activity">
    <reaction evidence="21">
        <text>a jasmonate + an L-alpha-amino acid + ATP = a jasmonyl-L-amino acid + AMP + diphosphate + H(+)</text>
        <dbReference type="Rhea" id="RHEA:55772"/>
        <dbReference type="ChEBI" id="CHEBI:15378"/>
        <dbReference type="ChEBI" id="CHEBI:30616"/>
        <dbReference type="ChEBI" id="CHEBI:33019"/>
        <dbReference type="ChEBI" id="CHEBI:59869"/>
        <dbReference type="ChEBI" id="CHEBI:136183"/>
        <dbReference type="ChEBI" id="CHEBI:136184"/>
        <dbReference type="ChEBI" id="CHEBI:456215"/>
        <dbReference type="EC" id="6.3.2.52"/>
    </reaction>
</comment>
<comment type="catalytic activity">
    <reaction evidence="15">
        <text>(+)-7-isojasmonate + L-isoleucine + ATP = L-isoleucine-(+)-7-isojasmonate + AMP + diphosphate + H(+)</text>
        <dbReference type="Rhea" id="RHEA:54812"/>
        <dbReference type="ChEBI" id="CHEBI:15378"/>
        <dbReference type="ChEBI" id="CHEBI:30616"/>
        <dbReference type="ChEBI" id="CHEBI:33019"/>
        <dbReference type="ChEBI" id="CHEBI:58045"/>
        <dbReference type="ChEBI" id="CHEBI:136179"/>
        <dbReference type="ChEBI" id="CHEBI:136180"/>
        <dbReference type="ChEBI" id="CHEBI:456215"/>
    </reaction>
    <physiologicalReaction direction="left-to-right" evidence="15">
        <dbReference type="Rhea" id="RHEA:54813"/>
    </physiologicalReaction>
</comment>
<comment type="activity regulation">
    <text evidence="27">Activated by GSTU20/FIP1.</text>
</comment>
<comment type="biophysicochemical properties">
    <kinetics>
        <KM evidence="21">0.03 mM for Ile</KM>
        <KM evidence="21">1.93 mM for Leu</KM>
        <KM evidence="21">1.84 mM for Phe</KM>
        <KM evidence="21">2.49 mM for Val</KM>
        <KM evidence="21">0.19 mM for (-)-JA</KM>
        <Vmax evidence="21">92.4 nmol/min/mg enzyme with Ile as substrate</Vmax>
        <Vmax evidence="21">196.9 nmol/min/mg enzyme with Leu as substrate</Vmax>
        <Vmax evidence="21">68.1 nmol/min/mg enzyme with Phe as substrate</Vmax>
        <Vmax evidence="21">326.1 nmol/min/mg enzyme with Val as substrate</Vmax>
        <Vmax evidence="21">68.8 nmol/min/mg enzyme with (-)-JA as substrate</Vmax>
        <Vmax evidence="27">25.38 umol/min/mg enzyme with ATP as substrate (in the presence of JA)</Vmax>
        <Vmax evidence="27">59.17 umol/min/mg enzyme with ATP as substrate (in the presence of JA and when in complex with GSTU20/FIP1)</Vmax>
        <text evidence="21 27">All results obtained at pH 8.6 and 25 degrees Celsius (PubMed:18247047). kcat is 2.72 sec(-1) with ATP as substrate (in the presence of JA). kcat is 6.32 sec(-1) with ATP as substrate (in the presence of JA and when in complex with GSTU20/FIP1) (PubMed:28223489).</text>
    </kinetics>
</comment>
<comment type="subunit">
    <text evidence="18 27">Interacts with GSTU20/FIP1 under continuous far red (cFR) light; this binding increases its activity and determines the priority of substrate binding.</text>
</comment>
<comment type="subcellular location">
    <subcellularLocation>
        <location evidence="2">Cytoplasm</location>
    </subcellularLocation>
</comment>
<comment type="alternative products">
    <event type="alternative splicing"/>
    <isoform>
        <id>Q9SKE2-1</id>
        <name>1</name>
        <sequence type="displayed"/>
    </isoform>
    <isoform>
        <id>Q9SKE2-2</id>
        <name>2</name>
        <sequence type="described" ref="VSP_040469"/>
    </isoform>
    <isoform>
        <id>Q9SKE2-3</id>
        <name>3</name>
        <sequence type="described" ref="VSP_040468"/>
    </isoform>
</comment>
<comment type="induction">
    <text evidence="2 21">Rapidly induced by auxin. Accumulates locally in response to wounding.</text>
</comment>
<comment type="disruption phenotype">
    <text evidence="2 3 4 5 6 7 8 9 10 11 12 13 14 16 17 18 20 21 22 23 24 25 28 29">Long hypocotyl phenotype under continuous far red (cFR) light. Suppression of COP1 disruption. Decreased sensitivity to jasmonic acid (JA) and methyl-jasmonate (MeJA) inhibition of root elongation, but increased sensitivity to abscisic acid during seed germination. Reduced induced systemic resistance (ISR) mediated by P.fluorescens (CHAOr and WCS417r) and P.putida LSW17S in roots toward H.parasitica and P.syringae pv. tomato in leaves. Increased susceptibility to the fungi P.irregulare, U.vignae and U.appendiculatus. Enhanced sensitivity to ozone O(3). Reduced fungal toxin fumonisin B1-mediated (FB1) induced apoptosis-like programmed cell death (PCD). Impaired SA-mediated, NPR1-independent resistance pathway. Reduced gene induction in resposne to chitin. Reduced PGIP2 accumulation upon B.cinerea infection leading to enhanced sensitivity. Altered defense activation by volatile compounds such as C6-aldehydes. Disrupted UV-B alteration of leaves attractiveness to diamondback moths P.xylostella, accompanied with reduced levels of UV-absorbing phenolic compounds. Reduced accumulation of JA-Ile conjugates in response to wounding, both locally and systemically. Compromised P.oligandrum cell wall protein fraction (CWP) induce systemic resistance against R.solanaceraum and P.syringae pv. tomato. Enhanced resistance to F.graminearum.</text>
</comment>
<comment type="similarity">
    <text evidence="33">Belongs to the IAA-amido conjugating enzyme family.</text>
</comment>
<reference key="1">
    <citation type="journal article" date="2000" name="Genes Dev.">
        <title>FIN219, an auxin-regulated gene, defines a link between phytochrome A and the downstream regulator COP1 in light control of Arabidopsis development.</title>
        <authorList>
            <person name="Hsieh H.-L."/>
            <person name="Okamoto H."/>
            <person name="Wang M."/>
            <person name="Ang L.-H."/>
            <person name="Matsui M."/>
            <person name="Goodman H."/>
            <person name="Deng X.W."/>
        </authorList>
    </citation>
    <scope>NUCLEOTIDE SEQUENCE [GENOMIC DNA]</scope>
    <scope>FUNCTION</scope>
    <scope>DISRUPTION PHENOTYPE</scope>
    <scope>INDUCTION BY AUXIN</scope>
    <scope>SUBCELLULAR LOCATION</scope>
    <source>
        <strain>cv. Columbia</strain>
    </source>
</reference>
<reference key="2">
    <citation type="journal article" date="1999" name="Nature">
        <title>Sequence and analysis of chromosome 2 of the plant Arabidopsis thaliana.</title>
        <authorList>
            <person name="Lin X."/>
            <person name="Kaul S."/>
            <person name="Rounsley S.D."/>
            <person name="Shea T.P."/>
            <person name="Benito M.-I."/>
            <person name="Town C.D."/>
            <person name="Fujii C.Y."/>
            <person name="Mason T.M."/>
            <person name="Bowman C.L."/>
            <person name="Barnstead M.E."/>
            <person name="Feldblyum T.V."/>
            <person name="Buell C.R."/>
            <person name="Ketchum K.A."/>
            <person name="Lee J.J."/>
            <person name="Ronning C.M."/>
            <person name="Koo H.L."/>
            <person name="Moffat K.S."/>
            <person name="Cronin L.A."/>
            <person name="Shen M."/>
            <person name="Pai G."/>
            <person name="Van Aken S."/>
            <person name="Umayam L."/>
            <person name="Tallon L.J."/>
            <person name="Gill J.E."/>
            <person name="Adams M.D."/>
            <person name="Carrera A.J."/>
            <person name="Creasy T.H."/>
            <person name="Goodman H.M."/>
            <person name="Somerville C.R."/>
            <person name="Copenhaver G.P."/>
            <person name="Preuss D."/>
            <person name="Nierman W.C."/>
            <person name="White O."/>
            <person name="Eisen J.A."/>
            <person name="Salzberg S.L."/>
            <person name="Fraser C.M."/>
            <person name="Venter J.C."/>
        </authorList>
    </citation>
    <scope>NUCLEOTIDE SEQUENCE [LARGE SCALE GENOMIC DNA]</scope>
    <source>
        <strain>cv. Columbia</strain>
    </source>
</reference>
<reference key="3">
    <citation type="journal article" date="2017" name="Plant J.">
        <title>Araport11: a complete reannotation of the Arabidopsis thaliana reference genome.</title>
        <authorList>
            <person name="Cheng C.Y."/>
            <person name="Krishnakumar V."/>
            <person name="Chan A.P."/>
            <person name="Thibaud-Nissen F."/>
            <person name="Schobel S."/>
            <person name="Town C.D."/>
        </authorList>
    </citation>
    <scope>GENOME REANNOTATION</scope>
    <source>
        <strain>cv. Columbia</strain>
    </source>
</reference>
<reference key="4">
    <citation type="journal article" date="2003" name="Science">
        <title>Empirical analysis of transcriptional activity in the Arabidopsis genome.</title>
        <authorList>
            <person name="Yamada K."/>
            <person name="Lim J."/>
            <person name="Dale J.M."/>
            <person name="Chen H."/>
            <person name="Shinn P."/>
            <person name="Palm C.J."/>
            <person name="Southwick A.M."/>
            <person name="Wu H.C."/>
            <person name="Kim C.J."/>
            <person name="Nguyen M."/>
            <person name="Pham P.K."/>
            <person name="Cheuk R.F."/>
            <person name="Karlin-Newmann G."/>
            <person name="Liu S.X."/>
            <person name="Lam B."/>
            <person name="Sakano H."/>
            <person name="Wu T."/>
            <person name="Yu G."/>
            <person name="Miranda M."/>
            <person name="Quach H.L."/>
            <person name="Tripp M."/>
            <person name="Chang C.H."/>
            <person name="Lee J.M."/>
            <person name="Toriumi M.J."/>
            <person name="Chan M.M."/>
            <person name="Tang C.C."/>
            <person name="Onodera C.S."/>
            <person name="Deng J.M."/>
            <person name="Akiyama K."/>
            <person name="Ansari Y."/>
            <person name="Arakawa T."/>
            <person name="Banh J."/>
            <person name="Banno F."/>
            <person name="Bowser L."/>
            <person name="Brooks S.Y."/>
            <person name="Carninci P."/>
            <person name="Chao Q."/>
            <person name="Choy N."/>
            <person name="Enju A."/>
            <person name="Goldsmith A.D."/>
            <person name="Gurjal M."/>
            <person name="Hansen N.F."/>
            <person name="Hayashizaki Y."/>
            <person name="Johnson-Hopson C."/>
            <person name="Hsuan V.W."/>
            <person name="Iida K."/>
            <person name="Karnes M."/>
            <person name="Khan S."/>
            <person name="Koesema E."/>
            <person name="Ishida J."/>
            <person name="Jiang P.X."/>
            <person name="Jones T."/>
            <person name="Kawai J."/>
            <person name="Kamiya A."/>
            <person name="Meyers C."/>
            <person name="Nakajima M."/>
            <person name="Narusaka M."/>
            <person name="Seki M."/>
            <person name="Sakurai T."/>
            <person name="Satou M."/>
            <person name="Tamse R."/>
            <person name="Vaysberg M."/>
            <person name="Wallender E.K."/>
            <person name="Wong C."/>
            <person name="Yamamura Y."/>
            <person name="Yuan S."/>
            <person name="Shinozaki K."/>
            <person name="Davis R.W."/>
            <person name="Theologis A."/>
            <person name="Ecker J.R."/>
        </authorList>
    </citation>
    <scope>NUCLEOTIDE SEQUENCE [LARGE SCALE MRNA] (ISOFORM 1)</scope>
    <source>
        <strain>cv. Columbia</strain>
    </source>
</reference>
<reference key="5">
    <citation type="journal article" date="2009" name="DNA Res.">
        <title>Analysis of multiple occurrences of alternative splicing events in Arabidopsis thaliana using novel sequenced full-length cDNAs.</title>
        <authorList>
            <person name="Iida K."/>
            <person name="Fukami-Kobayashi K."/>
            <person name="Toyoda A."/>
            <person name="Sakaki Y."/>
            <person name="Kobayashi M."/>
            <person name="Seki M."/>
            <person name="Shinozaki K."/>
        </authorList>
    </citation>
    <scope>NUCLEOTIDE SEQUENCE [LARGE SCALE MRNA] (ISOFORMS 1 AND 2)</scope>
    <source>
        <strain>cv. Columbia</strain>
        <tissue>Root</tissue>
    </source>
</reference>
<reference key="6">
    <citation type="submission" date="1993-10" db="EMBL/GenBank/DDBJ databases">
        <title>The Arabidopsis thaliana transcribed genome: the GDR cDNA program.</title>
        <authorList>
            <person name="Philipps G."/>
            <person name="Gigot C."/>
        </authorList>
    </citation>
    <scope>NUCLEOTIDE SEQUENCE [LARGE SCALE MRNA] OF 22-129 (ISOFORM 1)</scope>
    <source>
        <strain>cv. Columbia</strain>
        <tissue>Protoplast</tissue>
    </source>
</reference>
<reference key="7">
    <citation type="submission" date="2005-03" db="EMBL/GenBank/DDBJ databases">
        <title>Large-scale analysis of RIKEN Arabidopsis full-length (RAFL) cDNAs.</title>
        <authorList>
            <person name="Totoki Y."/>
            <person name="Seki M."/>
            <person name="Ishida J."/>
            <person name="Nakajima M."/>
            <person name="Enju A."/>
            <person name="Kamiya A."/>
            <person name="Narusaka M."/>
            <person name="Shin-i T."/>
            <person name="Nakagawa M."/>
            <person name="Sakamoto N."/>
            <person name="Oishi K."/>
            <person name="Kohara Y."/>
            <person name="Kobayashi M."/>
            <person name="Toyoda A."/>
            <person name="Sakaki Y."/>
            <person name="Sakurai T."/>
            <person name="Iida K."/>
            <person name="Akiyama K."/>
            <person name="Satou M."/>
            <person name="Toyoda T."/>
            <person name="Konagaya A."/>
            <person name="Carninci P."/>
            <person name="Kawai J."/>
            <person name="Hayashizaki Y."/>
            <person name="Shinozaki K."/>
        </authorList>
    </citation>
    <scope>NUCLEOTIDE SEQUENCE [LARGE SCALE MRNA] OF 316-575 (ISOFORM 1/2)</scope>
    <source>
        <strain>cv. Columbia</strain>
    </source>
</reference>
<reference key="8">
    <citation type="journal article" date="1992" name="Proc. Natl. Acad. Sci. U.S.A.">
        <title>Methyl jasmonate inhibition of root growth and induction of a leaf protein are decreased in an Arabidopsis thaliana mutant.</title>
        <authorList>
            <person name="Staswick P.E."/>
            <person name="Su W."/>
            <person name="Howell S.H."/>
        </authorList>
    </citation>
    <scope>FUNCTION</scope>
    <scope>DISRUPTION PHENOTYPE</scope>
    <source>
        <strain>cv. Columbia</strain>
    </source>
</reference>
<reference key="9">
    <citation type="journal article" date="1998" name="Plant Cell">
        <title>A novel signaling pathway controlling induced systemic resistance in Arabidopsis.</title>
        <authorList>
            <person name="Pieterse C.M.J."/>
            <person name="van Wees S.C.M."/>
            <person name="van Pelt J.A."/>
            <person name="Knoester M."/>
            <person name="Laan R."/>
            <person name="Gerrits H."/>
            <person name="Weisbeek P.J."/>
            <person name="van Loon L.C."/>
        </authorList>
    </citation>
    <scope>FUNCTION IN INDUCED SYSTEMIC RESISTANCE</scope>
    <scope>DISRUPTION PHENOTYPE</scope>
    <source>
        <strain>cv. Columbia</strain>
    </source>
</reference>
<reference key="10">
    <citation type="journal article" date="1998" name="Plant J.">
        <title>Jasmonate signaling mutants of Arabidopsis are susceptible to the soil fungus Pythium irregulare.</title>
        <authorList>
            <person name="Staswick P.E."/>
            <person name="Yuen G.Y."/>
            <person name="Lehman C.C."/>
        </authorList>
    </citation>
    <scope>FUNCTION</scope>
    <scope>DISRUPTION PHENOTYPE</scope>
</reference>
<reference key="11">
    <citation type="journal article" date="2000" name="Plant Cell">
        <title>Jasmonic acid signaling modulates ozone-induced hypersensitive cell death.</title>
        <authorList>
            <person name="Rao M.V."/>
            <person name="Lee H."/>
            <person name="Creelman R.A."/>
            <person name="Mullet J.E."/>
            <person name="Davis K.R."/>
        </authorList>
    </citation>
    <scope>FUNCTION</scope>
    <scope>DISRUPTION PHENOTYPE</scope>
</reference>
<reference key="12">
    <citation type="journal article" date="2000" name="Plant Cell">
        <title>Fumonisin B1-induced cell death in arabidopsis protoplasts requires jasmonate-, ethylene-, and salicylate-dependent signaling pathways.</title>
        <authorList>
            <person name="Asai T."/>
            <person name="Stone J.M."/>
            <person name="Heard J.E."/>
            <person name="Kovtun Y."/>
            <person name="Yorgey P."/>
            <person name="Sheen J."/>
            <person name="Ausubel F.M."/>
        </authorList>
    </citation>
    <scope>FUNCTION</scope>
    <scope>DISRUPTION PHENOTYPE</scope>
</reference>
<reference key="13">
    <citation type="journal article" date="2000" name="Plant Cell">
        <title>Ozone-sensitive arabidopsis rcd1 mutant reveals opposite roles for ethylene and jasmonate signaling pathways in regulating superoxide-dependent cell death.</title>
        <authorList>
            <person name="Overmyer K."/>
            <person name="Tuominen H."/>
            <person name="Kettunen R."/>
            <person name="Betz C."/>
            <person name="Langebartels C."/>
            <person name="Sandermann H. Jr."/>
            <person name="Kangasjaervi J."/>
        </authorList>
    </citation>
    <scope>FUNCTION</scope>
    <scope>DISRUPTION PHENOTYPE</scope>
    <source>
        <strain>cv. Columbia</strain>
    </source>
</reference>
<reference key="14">
    <citation type="journal article" date="2000" name="Plant Cell">
        <title>Roles of salicylic acid, jasmonic acid, and ethylene in cpr-induced resistance in arabidopsis.</title>
        <authorList>
            <person name="Clarke J.D."/>
            <person name="Volko S.M."/>
            <person name="Ledford H."/>
            <person name="Ausubel F.M."/>
            <person name="Dong X."/>
        </authorList>
    </citation>
    <scope>FUNCTION</scope>
    <scope>DISRUPTION PHENOTYPE</scope>
</reference>
<reference key="15">
    <citation type="journal article" date="2002" name="Mol. Plant Microbe Interact.">
        <title>Characterization of early, chitin-induced gene expression in Arabidopsis.</title>
        <authorList>
            <person name="Zhang B."/>
            <person name="Ramonell K."/>
            <person name="Somerville S."/>
            <person name="Stacey G."/>
        </authorList>
    </citation>
    <scope>FUNCTION</scope>
    <scope>DISRUPTION PHENOTYPE</scope>
</reference>
<reference key="16">
    <citation type="journal article" date="2002" name="Plant Cell">
        <title>Jasmonate response locus JAR1 and several related Arabidopsis genes encode enzymes of the firefly luciferase superfamily that show activity on jasmonic, salicylic, and indole-3-acetic acids in an assay for adenylation.</title>
        <authorList>
            <person name="Staswick P.E."/>
            <person name="Tiryaki I."/>
            <person name="Rowe M.L."/>
        </authorList>
    </citation>
    <scope>FUNCTION AS JASMONATE ADENYLASE</scope>
    <scope>MUTAGENESIS OF SER-101; GLY-303 AND GLU-334</scope>
    <scope>DISRUPTION PHENOTYPE</scope>
</reference>
<reference key="17">
    <citation type="journal article" date="2002" name="Plant Physiol.">
        <title>An Arabidopsis mutant defective in jasmonate response is allelic to the auxin-signaling mutant axr1.</title>
        <authorList>
            <person name="Tiryaki I."/>
            <person name="Staswick P.E."/>
        </authorList>
    </citation>
    <scope>FUNCTION</scope>
    <scope>DISRUPTION PHENOTYPE</scope>
</reference>
<reference key="18">
    <citation type="journal article" date="2003" name="Mol. Plant Microbe Interact.">
        <title>An investigation into the involvement of defense signaling pathways in components of the nonhost resistance of Arabidopsis thaliana to rust fungi also reveals a model system for studying rust fungal compatibility.</title>
        <authorList>
            <person name="Mellersh D.G."/>
            <person name="Heath M.C."/>
        </authorList>
    </citation>
    <scope>FUNCTION</scope>
    <scope>DISRUPTION PHENOTYPE</scope>
</reference>
<reference key="19">
    <citation type="journal article" date="2003" name="Mol. Plant Microbe Interact.">
        <title>Induced systemic resistance in Arabidopsis thaliana in response to root inoculation with Pseudomonas fluorescens CHA0.</title>
        <authorList>
            <person name="Iavicoli A."/>
            <person name="Boutet E."/>
            <person name="Buchala A."/>
            <person name="Metraux J.P."/>
        </authorList>
    </citation>
    <scope>FUNCTION IN INDUCED SYSTEMIC RESISTANCE</scope>
    <scope>DISRUPTION PHENOTYPE</scope>
</reference>
<reference key="20">
    <citation type="journal article" date="2003" name="Plant Cell">
        <title>Tandemly duplicated Arabidopsis genes that encode polygalacturonase-inhibiting proteins are regulated coordinately by different signal transduction pathways in response to fungal infection.</title>
        <authorList>
            <person name="Ferrari S."/>
            <person name="Vairo D."/>
            <person name="Ausubel F.M."/>
            <person name="Cervone F."/>
            <person name="De Lorenzo G."/>
        </authorList>
    </citation>
    <scope>FUNCTION</scope>
    <scope>DISRUPTION PHENOTYPE</scope>
</reference>
<reference key="21">
    <citation type="journal article" date="2003" name="Plant J.">
        <title>Arabidopsis local resistance to Botrytis cinerea involves salicylic acid and camalexin and requires EDS4 and PAD2, but not SID2, EDS5 or PAD4.</title>
        <authorList>
            <person name="Ferrari S."/>
            <person name="Plotnikova J.M."/>
            <person name="De Lorenzo G."/>
            <person name="Ausubel F.M."/>
        </authorList>
    </citation>
    <scope>FUNCTION</scope>
    <scope>DISRUPTION PHENOTYPE</scope>
</reference>
<reference key="22">
    <citation type="journal article" date="2004" name="Plant Cell">
        <title>The oxylipin signal jasmonic acid is activated by an enzyme that conjugates it to isoleucine in Arabidopsis.</title>
        <authorList>
            <person name="Staswick P.E."/>
            <person name="Tiryaki I."/>
        </authorList>
    </citation>
    <scope>FUNCTION AS JASMONATE ADENYLASE</scope>
    <scope>CATALYTIC ACTIVITY</scope>
</reference>
<reference key="23">
    <citation type="journal article" date="2005" name="Plant Cell Physiol.">
        <title>Volatile C6-aldehydes and allo-ocimene activate defense genes and induce resistance against Botrytis cinerea in Arabidopsis thaliana.</title>
        <authorList>
            <person name="Kishimoto K."/>
            <person name="Matsui K."/>
            <person name="Ozawa R."/>
            <person name="Takabayashi J."/>
        </authorList>
    </citation>
    <scope>FUNCTION</scope>
    <scope>DISRUPTION PHENOTYPE</scope>
</reference>
<reference key="24">
    <citation type="journal article" date="2006" name="Oecologia">
        <title>Solar ultraviolet-B radiation alters the attractiveness of Arabidopsis plants to diamondback moths (Plutella xylostella L.): impacts on oviposition and involvement of the jasmonic acid pathway.</title>
        <authorList>
            <person name="Caputo C."/>
            <person name="Rutitzky M."/>
            <person name="Ballare C.L."/>
        </authorList>
    </citation>
    <scope>FUNCTION</scope>
    <scope>DISRUPTION PHENOTYPE</scope>
    <source>
        <strain>cv. Columbia</strain>
    </source>
</reference>
<reference key="25">
    <citation type="journal article" date="2007" name="FEBS Lett.">
        <title>Substrate specificity and products of side-reactions catalyzed by jasmonate:amino acid synthetase (JAR1).</title>
        <authorList>
            <person name="Guranowski A."/>
            <person name="Miersch O."/>
            <person name="Staswick P.E."/>
            <person name="Suza W."/>
            <person name="Wasternack C."/>
        </authorList>
    </citation>
    <scope>FUNCTION AS JASMONATES ADENYLASE</scope>
</reference>
<reference key="26">
    <citation type="journal article" date="2007" name="Mol. Plant Microbe Interact.">
        <title>Rhizobacteria-induced priming in Arabidopsis is dependent on ethylene, jasmonic acid, and NPR1.</title>
        <authorList>
            <person name="Ahn I.-P."/>
            <person name="Lee S.-W."/>
            <person name="Suh S.-C."/>
        </authorList>
    </citation>
    <scope>FUNCTION IN INDUCED SYSTEMIC RESISTANCE</scope>
    <scope>DISRUPTION PHENOTYPE</scope>
    <source>
        <strain>cv. Columbia</strain>
    </source>
</reference>
<reference key="27">
    <citation type="journal article" date="2007" name="Plant Physiol.">
        <title>Glutathione S-transferase interacting with far-red insensitive 219 is involved in phytochrome A-mediated signaling in Arabidopsis.</title>
        <authorList>
            <person name="Chen I.-C."/>
            <person name="Huang I.-C."/>
            <person name="Liu M.-J."/>
            <person name="Wang Z.-G."/>
            <person name="Chung S.-S."/>
            <person name="Hsieh H.-L."/>
        </authorList>
    </citation>
    <scope>FUNCTION</scope>
    <scope>DISRUPTION PHENOTYPE</scope>
    <scope>INTERACTION WITH GSTU20/FIP1</scope>
</reference>
<reference key="28">
    <citation type="journal article" date="2008" name="Planta">
        <title>The role of JAR1 in Jasmonoyl-L: -isoleucine production during Arabidopsis wound response.</title>
        <authorList>
            <person name="Suza W.P."/>
            <person name="Staswick P.E."/>
        </authorList>
    </citation>
    <scope>FUNCTION AS JASMONATES ADENYLASE</scope>
    <scope>CATALYTIC ACTIVITY</scope>
    <scope>BIOPHYSICOCHEMICAL PROPERTIES</scope>
    <scope>INDUCTION BY WOUNDING</scope>
    <scope>DISRUPTION PHENOTYPE</scope>
    <source>
        <strain>cv. Columbia</strain>
    </source>
</reference>
<reference key="29">
    <citation type="journal article" date="2009" name="Plant Cell Physiol.">
        <title>Enhanced defense responses in Arabidopsis induced by the cell wall protein fractions from Pythium oligandrum require SGT1, RAR1, NPR1 and JAR1.</title>
        <authorList>
            <person name="Kawamura Y."/>
            <person name="Takenaka S."/>
            <person name="Hase S."/>
            <person name="Kubota M."/>
            <person name="Ichinose Y."/>
            <person name="Kanayama Y."/>
            <person name="Nakaho K."/>
            <person name="Klessig D.F."/>
            <person name="Takahashi H."/>
        </authorList>
    </citation>
    <scope>FUNCTION</scope>
    <scope>DISRUPTION PHENOTYPE</scope>
    <source>
        <strain>cv. Columbia</strain>
    </source>
</reference>
<reference key="30">
    <citation type="journal article" date="2009" name="Plant J.">
        <title>A rapid wound signal activates the systemic synthesis of bioactive jasmonates in Arabidopsis.</title>
        <authorList>
            <person name="Koo A.J.K."/>
            <person name="Gao X."/>
            <person name="Jones A.D."/>
            <person name="Howe G.A."/>
        </authorList>
    </citation>
    <scope>FUNCTION</scope>
    <scope>DISRUPTION PHENOTYPE</scope>
    <source>
        <strain>cv. Columbia</strain>
        <strain>cv. Wassilewskija</strain>
    </source>
</reference>
<reference key="31">
    <citation type="journal article" date="2009" name="Proc. Natl. Acad. Sci. U.S.A.">
        <title>Ecological modulation of plant defense via phytochrome control of jasmonate sensitivity.</title>
        <authorList>
            <person name="Moreno J.E."/>
            <person name="Tao Y."/>
            <person name="Chory J."/>
            <person name="Ballare C.L."/>
        </authorList>
    </citation>
    <scope>FUNCTION IN FAR-RED LIGHT SIGNALING</scope>
    <scope>DISRUPTION PHENOTYPE</scope>
    <source>
        <strain>cv. Columbia</strain>
    </source>
</reference>
<reference key="32">
    <citation type="journal article" date="2010" name="Mol. Plant Microbe Interact.">
        <title>Involvement of salicylate and jasmonate signaling pathways in Arabidopsis interaction with Fusarium graminearum.</title>
        <authorList>
            <person name="Makandar R."/>
            <person name="Nalam V."/>
            <person name="Chaturvedi R."/>
            <person name="Jeannotte R."/>
            <person name="Sparks A.A."/>
            <person name="Shah J."/>
        </authorList>
    </citation>
    <scope>FUNCTION</scope>
    <scope>DISRUPTION PHENOTYPE</scope>
</reference>
<reference key="33">
    <citation type="journal article" date="2012" name="Science">
        <title>Structural basis for prereceptor modulation of plant hormones by GH3 proteins.</title>
        <authorList>
            <person name="Westfall C.S."/>
            <person name="Zubieta C."/>
            <person name="Herrmann J."/>
            <person name="Kapp U."/>
            <person name="Nanao M.H."/>
            <person name="Jez J.M."/>
        </authorList>
    </citation>
    <scope>X-RAY CRYSTALLOGRAPHY (2.01 ANGSTROMS) IN COMPLEX WITH JASMONOYL-ISOLEUCINE</scope>
</reference>
<reference key="34">
    <citation type="journal article" date="2017" name="Proc. Natl. Acad. Sci. U.S.A.">
        <title>Structural basis of jasmonate-amido synthetase FIN219 in complex with glutathione S-transferase FIP1 during the JA signal regulation.</title>
        <authorList>
            <person name="Chen C.-Y."/>
            <person name="Ho S.-S."/>
            <person name="Kuo T.-Y."/>
            <person name="Hsieh H.-L."/>
            <person name="Cheng Y.-S."/>
        </authorList>
    </citation>
    <scope>X-RAY CRYSTALLOGRAPHY (1.54 ANGSTROMS) IN COMPLEX WITH GSTU20/FIP1; ATP; L-ISOLEUCINE; L-LEUCINE; L-METHIONINE; L-VALINE AND JASMONOYL-ISOLEUCINE</scope>
    <scope>FUNCTION</scope>
    <scope>MUTAGENESIS OF SER-101</scope>
    <scope>BIOPHYSICOCHEMICAL PROPERTIES</scope>
    <scope>ACTIVITY REGULATION</scope>
</reference>
<name>JAR1_ARATH</name>
<dbReference type="EC" id="6.3.2.52" evidence="21"/>
<dbReference type="EMBL" id="AF279129">
    <property type="protein sequence ID" value="AAF86349.1"/>
    <property type="molecule type" value="Genomic_DNA"/>
</dbReference>
<dbReference type="EMBL" id="AC006526">
    <property type="protein sequence ID" value="AAD23040.2"/>
    <property type="molecule type" value="Genomic_DNA"/>
</dbReference>
<dbReference type="EMBL" id="CP002685">
    <property type="protein sequence ID" value="AEC10683.1"/>
    <property type="molecule type" value="Genomic_DNA"/>
</dbReference>
<dbReference type="EMBL" id="CP002685">
    <property type="protein sequence ID" value="AEC10684.1"/>
    <property type="molecule type" value="Genomic_DNA"/>
</dbReference>
<dbReference type="EMBL" id="CP002685">
    <property type="protein sequence ID" value="AEC10685.1"/>
    <property type="molecule type" value="Genomic_DNA"/>
</dbReference>
<dbReference type="EMBL" id="AY050861">
    <property type="protein sequence ID" value="AAK92798.1"/>
    <property type="molecule type" value="mRNA"/>
</dbReference>
<dbReference type="EMBL" id="AY150437">
    <property type="protein sequence ID" value="AAN12979.1"/>
    <property type="molecule type" value="mRNA"/>
</dbReference>
<dbReference type="EMBL" id="AK316746">
    <property type="protein sequence ID" value="BAH19469.1"/>
    <property type="molecule type" value="mRNA"/>
</dbReference>
<dbReference type="EMBL" id="AK319095">
    <property type="protein sequence ID" value="BAH57210.1"/>
    <property type="molecule type" value="mRNA"/>
</dbReference>
<dbReference type="EMBL" id="Z26804">
    <property type="protein sequence ID" value="CAA81417.1"/>
    <property type="molecule type" value="mRNA"/>
</dbReference>
<dbReference type="EMBL" id="AK221189">
    <property type="protein sequence ID" value="BAD95281.1"/>
    <property type="molecule type" value="mRNA"/>
</dbReference>
<dbReference type="PIR" id="A84902">
    <property type="entry name" value="A84902"/>
</dbReference>
<dbReference type="RefSeq" id="NP_001078069.1">
    <molecule id="Q9SKE2-3"/>
    <property type="nucleotide sequence ID" value="NM_001084600.1"/>
</dbReference>
<dbReference type="RefSeq" id="NP_566071.1">
    <molecule id="Q9SKE2-1"/>
    <property type="nucleotide sequence ID" value="NM_130200.2"/>
</dbReference>
<dbReference type="RefSeq" id="NP_850453.1">
    <molecule id="Q9SKE2-1"/>
    <property type="nucleotide sequence ID" value="NM_180122.4"/>
</dbReference>
<dbReference type="PDB" id="4EPL">
    <property type="method" value="X-ray"/>
    <property type="resolution" value="2.01 A"/>
    <property type="chains" value="A=1-575"/>
</dbReference>
<dbReference type="PDB" id="5ECH">
    <property type="method" value="X-ray"/>
    <property type="resolution" value="2.14 A"/>
    <property type="chains" value="A/D=1-575"/>
</dbReference>
<dbReference type="PDB" id="5ECI">
    <property type="method" value="X-ray"/>
    <property type="resolution" value="1.56 A"/>
    <property type="chains" value="A/D=1-575"/>
</dbReference>
<dbReference type="PDB" id="5ECK">
    <property type="method" value="X-ray"/>
    <property type="resolution" value="1.54 A"/>
    <property type="chains" value="A/D=1-575"/>
</dbReference>
<dbReference type="PDB" id="5ECL">
    <property type="method" value="X-ray"/>
    <property type="resolution" value="1.85 A"/>
    <property type="chains" value="A/D=1-575"/>
</dbReference>
<dbReference type="PDB" id="5ECM">
    <property type="method" value="X-ray"/>
    <property type="resolution" value="1.60 A"/>
    <property type="chains" value="A/D=1-575"/>
</dbReference>
<dbReference type="PDB" id="5ECN">
    <property type="method" value="X-ray"/>
    <property type="resolution" value="1.72 A"/>
    <property type="chains" value="A/D=1-575"/>
</dbReference>
<dbReference type="PDB" id="5ECO">
    <property type="method" value="X-ray"/>
    <property type="resolution" value="1.80 A"/>
    <property type="chains" value="A/D=1-575"/>
</dbReference>
<dbReference type="PDB" id="5ECP">
    <property type="method" value="X-ray"/>
    <property type="resolution" value="2.25 A"/>
    <property type="chains" value="A/D=1-575"/>
</dbReference>
<dbReference type="PDB" id="5ECQ">
    <property type="method" value="X-ray"/>
    <property type="resolution" value="1.66 A"/>
    <property type="chains" value="A/D=1-575"/>
</dbReference>
<dbReference type="PDB" id="5ECR">
    <property type="method" value="X-ray"/>
    <property type="resolution" value="1.72 A"/>
    <property type="chains" value="A/D=1-575"/>
</dbReference>
<dbReference type="PDB" id="5GZZ">
    <property type="method" value="X-ray"/>
    <property type="resolution" value="2.39 A"/>
    <property type="chains" value="A=1-575"/>
</dbReference>
<dbReference type="PDBsum" id="4EPL"/>
<dbReference type="PDBsum" id="5ECH"/>
<dbReference type="PDBsum" id="5ECI"/>
<dbReference type="PDBsum" id="5ECK"/>
<dbReference type="PDBsum" id="5ECL"/>
<dbReference type="PDBsum" id="5ECM"/>
<dbReference type="PDBsum" id="5ECN"/>
<dbReference type="PDBsum" id="5ECO"/>
<dbReference type="PDBsum" id="5ECP"/>
<dbReference type="PDBsum" id="5ECQ"/>
<dbReference type="PDBsum" id="5ECR"/>
<dbReference type="PDBsum" id="5GZZ"/>
<dbReference type="SMR" id="Q9SKE2"/>
<dbReference type="BioGRID" id="4579">
    <property type="interactions" value="4"/>
</dbReference>
<dbReference type="FunCoup" id="Q9SKE2">
    <property type="interactions" value="1896"/>
</dbReference>
<dbReference type="STRING" id="3702.Q9SKE2"/>
<dbReference type="SwissLipids" id="SLP:000001772"/>
<dbReference type="GlyGen" id="Q9SKE2">
    <property type="glycosylation" value="1 site"/>
</dbReference>
<dbReference type="iPTMnet" id="Q9SKE2"/>
<dbReference type="PaxDb" id="3702-AT2G46370.4"/>
<dbReference type="ProteomicsDB" id="232263">
    <molecule id="Q9SKE2-1"/>
</dbReference>
<dbReference type="EnsemblPlants" id="AT2G46370.1">
    <molecule id="Q9SKE2-1"/>
    <property type="protein sequence ID" value="AT2G46370.1"/>
    <property type="gene ID" value="AT2G46370"/>
</dbReference>
<dbReference type="EnsemblPlants" id="AT2G46370.2">
    <molecule id="Q9SKE2-1"/>
    <property type="protein sequence ID" value="AT2G46370.2"/>
    <property type="gene ID" value="AT2G46370"/>
</dbReference>
<dbReference type="EnsemblPlants" id="AT2G46370.3">
    <molecule id="Q9SKE2-3"/>
    <property type="protein sequence ID" value="AT2G46370.3"/>
    <property type="gene ID" value="AT2G46370"/>
</dbReference>
<dbReference type="GeneID" id="819244"/>
<dbReference type="Gramene" id="AT2G46370.1">
    <molecule id="Q9SKE2-1"/>
    <property type="protein sequence ID" value="AT2G46370.1"/>
    <property type="gene ID" value="AT2G46370"/>
</dbReference>
<dbReference type="Gramene" id="AT2G46370.2">
    <molecule id="Q9SKE2-1"/>
    <property type="protein sequence ID" value="AT2G46370.2"/>
    <property type="gene ID" value="AT2G46370"/>
</dbReference>
<dbReference type="Gramene" id="AT2G46370.3">
    <molecule id="Q9SKE2-3"/>
    <property type="protein sequence ID" value="AT2G46370.3"/>
    <property type="gene ID" value="AT2G46370"/>
</dbReference>
<dbReference type="KEGG" id="ath:AT2G46370"/>
<dbReference type="Araport" id="AT2G46370"/>
<dbReference type="TAIR" id="AT2G46370">
    <property type="gene designation" value="JAR1"/>
</dbReference>
<dbReference type="eggNOG" id="ENOG502QPMW">
    <property type="taxonomic scope" value="Eukaryota"/>
</dbReference>
<dbReference type="HOGENOM" id="CLU_016249_2_1_1"/>
<dbReference type="InParanoid" id="Q9SKE2"/>
<dbReference type="OMA" id="HECCNCL"/>
<dbReference type="OrthoDB" id="10004661at2759"/>
<dbReference type="PhylomeDB" id="Q9SKE2"/>
<dbReference type="BioCyc" id="ARA:AT2G46370-MONOMER"/>
<dbReference type="BRENDA" id="6.3.2.52">
    <property type="organism ID" value="399"/>
</dbReference>
<dbReference type="SABIO-RK" id="Q9SKE2"/>
<dbReference type="EvolutionaryTrace" id="Q9SKE2"/>
<dbReference type="PRO" id="PR:Q9SKE2"/>
<dbReference type="Proteomes" id="UP000006548">
    <property type="component" value="Chromosome 2"/>
</dbReference>
<dbReference type="ExpressionAtlas" id="Q9SKE2">
    <property type="expression patterns" value="baseline and differential"/>
</dbReference>
<dbReference type="GO" id="GO:0005737">
    <property type="term" value="C:cytoplasm"/>
    <property type="evidence" value="ECO:0007669"/>
    <property type="project" value="UniProtKB-SubCell"/>
</dbReference>
<dbReference type="GO" id="GO:0016597">
    <property type="term" value="F:amino acid binding"/>
    <property type="evidence" value="ECO:0000314"/>
    <property type="project" value="UniProtKB"/>
</dbReference>
<dbReference type="GO" id="GO:0005524">
    <property type="term" value="F:ATP binding"/>
    <property type="evidence" value="ECO:0000314"/>
    <property type="project" value="UniProtKB"/>
</dbReference>
<dbReference type="GO" id="GO:0019899">
    <property type="term" value="F:enzyme binding"/>
    <property type="evidence" value="ECO:0000353"/>
    <property type="project" value="UniProtKB"/>
</dbReference>
<dbReference type="GO" id="GO:0080123">
    <property type="term" value="F:jasmonoyl-L-amino acid ligase activity"/>
    <property type="evidence" value="ECO:0007669"/>
    <property type="project" value="UniProtKB-EC"/>
</dbReference>
<dbReference type="GO" id="GO:0070728">
    <property type="term" value="F:L-leucine binding"/>
    <property type="evidence" value="ECO:0000314"/>
    <property type="project" value="UniProtKB"/>
</dbReference>
<dbReference type="GO" id="GO:0071365">
    <property type="term" value="P:cellular response to auxin stimulus"/>
    <property type="evidence" value="ECO:0000270"/>
    <property type="project" value="UniProtKB"/>
</dbReference>
<dbReference type="GO" id="GO:0009864">
    <property type="term" value="P:induced systemic resistance, jasmonic acid mediated signaling pathway"/>
    <property type="evidence" value="ECO:0000315"/>
    <property type="project" value="UniProtKB"/>
</dbReference>
<dbReference type="GO" id="GO:0018117">
    <property type="term" value="P:protein adenylylation"/>
    <property type="evidence" value="ECO:0000314"/>
    <property type="project" value="UniProtKB"/>
</dbReference>
<dbReference type="GO" id="GO:2000030">
    <property type="term" value="P:regulation of response to red or far red light"/>
    <property type="evidence" value="ECO:0000315"/>
    <property type="project" value="UniProtKB"/>
</dbReference>
<dbReference type="GO" id="GO:0010046">
    <property type="term" value="P:response to mycotoxin"/>
    <property type="evidence" value="ECO:0000315"/>
    <property type="project" value="UniProtKB"/>
</dbReference>
<dbReference type="GO" id="GO:0010224">
    <property type="term" value="P:response to UV-B"/>
    <property type="evidence" value="ECO:0000315"/>
    <property type="project" value="UniProtKB"/>
</dbReference>
<dbReference type="InterPro" id="IPR004993">
    <property type="entry name" value="GH3"/>
</dbReference>
<dbReference type="InterPro" id="IPR055378">
    <property type="entry name" value="GH3_C"/>
</dbReference>
<dbReference type="InterPro" id="IPR055377">
    <property type="entry name" value="GH3_M"/>
</dbReference>
<dbReference type="PANTHER" id="PTHR31901">
    <property type="entry name" value="GH3 DOMAIN-CONTAINING PROTEIN"/>
    <property type="match status" value="1"/>
</dbReference>
<dbReference type="PANTHER" id="PTHR31901:SF5">
    <property type="entry name" value="JASMONOYL--L-AMINO ACID SYNTHETASE JAR1"/>
    <property type="match status" value="1"/>
</dbReference>
<dbReference type="Pfam" id="PF03321">
    <property type="entry name" value="GH3"/>
    <property type="match status" value="1"/>
</dbReference>
<dbReference type="Pfam" id="PF23572">
    <property type="entry name" value="GH3_C"/>
    <property type="match status" value="1"/>
</dbReference>
<dbReference type="Pfam" id="PF23571">
    <property type="entry name" value="GH3_M"/>
    <property type="match status" value="1"/>
</dbReference>
<keyword id="KW-0002">3D-structure</keyword>
<keyword id="KW-0025">Alternative splicing</keyword>
<keyword id="KW-0067">ATP-binding</keyword>
<keyword id="KW-0175">Coiled coil</keyword>
<keyword id="KW-0963">Cytoplasm</keyword>
<keyword id="KW-0391">Immunity</keyword>
<keyword id="KW-0399">Innate immunity</keyword>
<keyword id="KW-1184">Jasmonic acid signaling pathway</keyword>
<keyword id="KW-0436">Ligase</keyword>
<keyword id="KW-0547">Nucleotide-binding</keyword>
<keyword id="KW-0611">Plant defense</keyword>
<keyword id="KW-1185">Reference proteome</keyword>
<accession>Q9SKE2</accession>
<accession>C0Z3D1</accession>
<accession>Q42147</accession>
<accession>Q56YY1</accession>
<accession>Q949V9</accession>
<accession>Q9LKI2</accession>
<organism>
    <name type="scientific">Arabidopsis thaliana</name>
    <name type="common">Mouse-ear cress</name>
    <dbReference type="NCBI Taxonomy" id="3702"/>
    <lineage>
        <taxon>Eukaryota</taxon>
        <taxon>Viridiplantae</taxon>
        <taxon>Streptophyta</taxon>
        <taxon>Embryophyta</taxon>
        <taxon>Tracheophyta</taxon>
        <taxon>Spermatophyta</taxon>
        <taxon>Magnoliopsida</taxon>
        <taxon>eudicotyledons</taxon>
        <taxon>Gunneridae</taxon>
        <taxon>Pentapetalae</taxon>
        <taxon>rosids</taxon>
        <taxon>malvids</taxon>
        <taxon>Brassicales</taxon>
        <taxon>Brassicaceae</taxon>
        <taxon>Camelineae</taxon>
        <taxon>Arabidopsis</taxon>
    </lineage>
</organism>